<organism>
    <name type="scientific">Escherichia coli O157:H7 (strain EC4115 / EHEC)</name>
    <dbReference type="NCBI Taxonomy" id="444450"/>
    <lineage>
        <taxon>Bacteria</taxon>
        <taxon>Pseudomonadati</taxon>
        <taxon>Pseudomonadota</taxon>
        <taxon>Gammaproteobacteria</taxon>
        <taxon>Enterobacterales</taxon>
        <taxon>Enterobacteriaceae</taxon>
        <taxon>Escherichia</taxon>
    </lineage>
</organism>
<protein>
    <recommendedName>
        <fullName evidence="1">ATP synthase subunit c</fullName>
    </recommendedName>
    <alternativeName>
        <fullName evidence="1">ATP synthase F(0) sector subunit c</fullName>
    </alternativeName>
    <alternativeName>
        <fullName evidence="1">F-type ATPase subunit c</fullName>
        <shortName evidence="1">F-ATPase subunit c</shortName>
    </alternativeName>
    <alternativeName>
        <fullName evidence="1">Lipid-binding protein</fullName>
    </alternativeName>
</protein>
<comment type="function">
    <text evidence="1">F(1)F(0) ATP synthase produces ATP from ADP in the presence of a proton or sodium gradient. F-type ATPases consist of two structural domains, F(1) containing the extramembraneous catalytic core and F(0) containing the membrane proton channel, linked together by a central stalk and a peripheral stalk. During catalysis, ATP synthesis in the catalytic domain of F(1) is coupled via a rotary mechanism of the central stalk subunits to proton translocation.</text>
</comment>
<comment type="function">
    <text evidence="1">Key component of the F(0) channel; it plays a direct role in translocation across the membrane. A homomeric c-ring of between 10-14 subunits forms the central stalk rotor element with the F(1) delta and epsilon subunits.</text>
</comment>
<comment type="subunit">
    <text evidence="1">F-type ATPases have 2 components, F(1) - the catalytic core - and F(0) - the membrane proton channel. F(1) has five subunits: alpha(3), beta(3), gamma(1), delta(1), epsilon(1). F(0) has three main subunits: a(1), b(2) and c(10-14). The alpha and beta chains form an alternating ring which encloses part of the gamma chain. F(1) is attached to F(0) by a central stalk formed by the gamma and epsilon chains, while a peripheral stalk is formed by the delta and b chains.</text>
</comment>
<comment type="subcellular location">
    <subcellularLocation>
        <location evidence="1">Cell inner membrane</location>
        <topology evidence="1">Multi-pass membrane protein</topology>
    </subcellularLocation>
</comment>
<comment type="similarity">
    <text evidence="1">Belongs to the ATPase C chain family.</text>
</comment>
<evidence type="ECO:0000255" key="1">
    <source>
        <dbReference type="HAMAP-Rule" id="MF_01396"/>
    </source>
</evidence>
<gene>
    <name evidence="1" type="primary">atpE</name>
    <name type="ordered locus">ECH74115_5173</name>
</gene>
<name>ATPL_ECO5E</name>
<feature type="chain" id="PRO_1000184364" description="ATP synthase subunit c">
    <location>
        <begin position="1"/>
        <end position="79"/>
    </location>
</feature>
<feature type="transmembrane region" description="Helical" evidence="1">
    <location>
        <begin position="11"/>
        <end position="31"/>
    </location>
</feature>
<feature type="transmembrane region" description="Helical" evidence="1">
    <location>
        <begin position="53"/>
        <end position="73"/>
    </location>
</feature>
<feature type="site" description="Reversibly protonated during proton transport" evidence="1">
    <location>
        <position position="61"/>
    </location>
</feature>
<accession>B5YXE1</accession>
<proteinExistence type="inferred from homology"/>
<sequence length="79" mass="8256">MENLNMDLLYMAAAVMMGLAAIGAAIGIGILGGKFLEGAARQPDLIPLLRTQFFIVMGLVDAIPMIAVGLGLYVMFAVA</sequence>
<dbReference type="EMBL" id="CP001164">
    <property type="protein sequence ID" value="ACI37008.1"/>
    <property type="molecule type" value="Genomic_DNA"/>
</dbReference>
<dbReference type="RefSeq" id="WP_000429386.1">
    <property type="nucleotide sequence ID" value="NC_011353.1"/>
</dbReference>
<dbReference type="SMR" id="B5YXE1"/>
<dbReference type="GeneID" id="98390858"/>
<dbReference type="KEGG" id="ecf:ECH74115_5173"/>
<dbReference type="HOGENOM" id="CLU_148047_1_0_6"/>
<dbReference type="GO" id="GO:0005886">
    <property type="term" value="C:plasma membrane"/>
    <property type="evidence" value="ECO:0007669"/>
    <property type="project" value="UniProtKB-SubCell"/>
</dbReference>
<dbReference type="GO" id="GO:0045259">
    <property type="term" value="C:proton-transporting ATP synthase complex"/>
    <property type="evidence" value="ECO:0007669"/>
    <property type="project" value="UniProtKB-KW"/>
</dbReference>
<dbReference type="GO" id="GO:0033177">
    <property type="term" value="C:proton-transporting two-sector ATPase complex, proton-transporting domain"/>
    <property type="evidence" value="ECO:0007669"/>
    <property type="project" value="InterPro"/>
</dbReference>
<dbReference type="GO" id="GO:0008289">
    <property type="term" value="F:lipid binding"/>
    <property type="evidence" value="ECO:0007669"/>
    <property type="project" value="UniProtKB-KW"/>
</dbReference>
<dbReference type="GO" id="GO:0046933">
    <property type="term" value="F:proton-transporting ATP synthase activity, rotational mechanism"/>
    <property type="evidence" value="ECO:0007669"/>
    <property type="project" value="UniProtKB-UniRule"/>
</dbReference>
<dbReference type="CDD" id="cd18185">
    <property type="entry name" value="ATP-synt_Fo_c_ATPE"/>
    <property type="match status" value="1"/>
</dbReference>
<dbReference type="FunFam" id="1.20.20.10:FF:000002">
    <property type="entry name" value="ATP synthase subunit c"/>
    <property type="match status" value="1"/>
</dbReference>
<dbReference type="Gene3D" id="1.20.20.10">
    <property type="entry name" value="F1F0 ATP synthase subunit C"/>
    <property type="match status" value="1"/>
</dbReference>
<dbReference type="HAMAP" id="MF_01396">
    <property type="entry name" value="ATP_synth_c_bact"/>
    <property type="match status" value="1"/>
</dbReference>
<dbReference type="InterPro" id="IPR005953">
    <property type="entry name" value="ATP_synth_csu_bac/chlpt"/>
</dbReference>
<dbReference type="InterPro" id="IPR000454">
    <property type="entry name" value="ATP_synth_F0_csu"/>
</dbReference>
<dbReference type="InterPro" id="IPR020537">
    <property type="entry name" value="ATP_synth_F0_csu_DDCD_BS"/>
</dbReference>
<dbReference type="InterPro" id="IPR038662">
    <property type="entry name" value="ATP_synth_F0_csu_sf"/>
</dbReference>
<dbReference type="InterPro" id="IPR002379">
    <property type="entry name" value="ATPase_proteolipid_c-like_dom"/>
</dbReference>
<dbReference type="InterPro" id="IPR035921">
    <property type="entry name" value="F/V-ATP_Csub_sf"/>
</dbReference>
<dbReference type="NCBIfam" id="TIGR01260">
    <property type="entry name" value="ATP_synt_c"/>
    <property type="match status" value="1"/>
</dbReference>
<dbReference type="NCBIfam" id="NF005363">
    <property type="entry name" value="PRK06876.1"/>
    <property type="match status" value="1"/>
</dbReference>
<dbReference type="Pfam" id="PF00137">
    <property type="entry name" value="ATP-synt_C"/>
    <property type="match status" value="1"/>
</dbReference>
<dbReference type="PRINTS" id="PR00124">
    <property type="entry name" value="ATPASEC"/>
</dbReference>
<dbReference type="SUPFAM" id="SSF81333">
    <property type="entry name" value="F1F0 ATP synthase subunit C"/>
    <property type="match status" value="1"/>
</dbReference>
<dbReference type="PROSITE" id="PS00605">
    <property type="entry name" value="ATPASE_C"/>
    <property type="match status" value="1"/>
</dbReference>
<keyword id="KW-0066">ATP synthesis</keyword>
<keyword id="KW-0997">Cell inner membrane</keyword>
<keyword id="KW-1003">Cell membrane</keyword>
<keyword id="KW-0138">CF(0)</keyword>
<keyword id="KW-0375">Hydrogen ion transport</keyword>
<keyword id="KW-0406">Ion transport</keyword>
<keyword id="KW-0446">Lipid-binding</keyword>
<keyword id="KW-0472">Membrane</keyword>
<keyword id="KW-0812">Transmembrane</keyword>
<keyword id="KW-1133">Transmembrane helix</keyword>
<keyword id="KW-0813">Transport</keyword>
<reference key="1">
    <citation type="journal article" date="2011" name="Proc. Natl. Acad. Sci. U.S.A.">
        <title>Genomic anatomy of Escherichia coli O157:H7 outbreaks.</title>
        <authorList>
            <person name="Eppinger M."/>
            <person name="Mammel M.K."/>
            <person name="Leclerc J.E."/>
            <person name="Ravel J."/>
            <person name="Cebula T.A."/>
        </authorList>
    </citation>
    <scope>NUCLEOTIDE SEQUENCE [LARGE SCALE GENOMIC DNA]</scope>
    <source>
        <strain>EC4115 / EHEC</strain>
    </source>
</reference>